<comment type="function">
    <text evidence="1 2 4">Single-stranded DNA-binding protein that preferentially binds to the sterol regulatory element (SRE) sequence 5'-GTGCGGTG-3', and thereby mediates transcriptional repression (By similarity). Has a role as transactivator of the Myc promoter (PubMed:12706888). Binds single-stranded RNA in a sequence-specific manner (By similarity). Binds G-rich elements in target mRNA coding sequences (By similarity). Prevents G-quadruplex structure formation in vitro, suggesting a role in supporting translation by resolving stable structures on mRNAs (By similarity).</text>
</comment>
<comment type="subunit">
    <text evidence="1">Associates with the 40S ribosomal subunit, the 80S ribosome and with polysomes.</text>
</comment>
<comment type="subcellular location">
    <subcellularLocation>
        <location evidence="4">Nucleus</location>
    </subcellularLocation>
    <subcellularLocation>
        <location evidence="6">Cytoplasm</location>
    </subcellularLocation>
    <subcellularLocation>
        <location evidence="6">Endoplasmic reticulum</location>
    </subcellularLocation>
</comment>
<comment type="alternative products">
    <event type="alternative splicing"/>
    <isoform>
        <id>P53996-1</id>
        <name>1</name>
        <sequence type="displayed"/>
    </isoform>
    <isoform>
        <id>P53996-2</id>
        <name>2</name>
        <sequence type="described" ref="VSP_010983 VSP_010984"/>
    </isoform>
    <isoform>
        <id>P53996-3</id>
        <name>3</name>
        <sequence type="described" ref="VSP_010984"/>
    </isoform>
</comment>
<comment type="developmental stage">
    <text evidence="4 5">Expressed from pre-gastrulation to organogenesis stages (at protein level) (PubMed:12706888). At this stage 7.5 dpc, expression becomes asymmetrical and localizes to all three germ layer regions of the anterior conceptus, suggesting a possible role in anterior-posterior axis patterning (at protein level) (PubMed:12706888). Later expressed in the forebrain (9 dpc and 10 dpc) and in the midbrain (11.5 dpc) (at protein level) (PubMed:12706888). From 9 dpc to 11.5 dpc, expressed in the early craniofacial structures, limb buds and somites (at protein level) (PubMed:12706888). Highest expression is in the face and includes the cranial and caudal regions of the mandibular prominences, the budding maxillary prominences and the roof of the stomodeum (at protein level) (PubMed:12706888). Before gastrulation, 5.5 dpc, expression is initially symmetric and uniform in the epiblast and in the extra-embryonic visceral endoderm (PubMed:7896269).</text>
</comment>
<comment type="PTM">
    <text evidence="1">Arginine methylation by PRMT1 in the Arg/Gly-rich region impedes RNA binding.</text>
</comment>
<protein>
    <recommendedName>
        <fullName evidence="9">CCHC-type zinc finger nucleic acid binding protein</fullName>
    </recommendedName>
    <alternativeName>
        <fullName evidence="10">Cellular nucleic acid-binding protein</fullName>
        <shortName evidence="9">CNBP</shortName>
    </alternativeName>
    <alternativeName>
        <fullName>Zinc finger protein 9</fullName>
    </alternativeName>
</protein>
<proteinExistence type="evidence at protein level"/>
<name>CNBP_MOUSE</name>
<reference key="1">
    <citation type="journal article" date="1994" name="Genomics">
        <title>Mouse cellular nucleic acid binding proteins: a highly conserved family identified by genetic mapping and sequencing.</title>
        <authorList>
            <person name="Warden C.H."/>
            <person name="Krisans S.K."/>
            <person name="Purcell-Huynh D."/>
            <person name="Leete L.M."/>
            <person name="Daluiski A."/>
            <person name="Diep A."/>
            <person name="Taylor B.A."/>
            <person name="Lusis A.J."/>
        </authorList>
    </citation>
    <scope>NUCLEOTIDE SEQUENCE [MRNA] (ISOFORMS 2 AND 3)</scope>
    <source>
        <strain>C57BL/6J X CBA/J</strain>
        <tissue>Liver</tissue>
    </source>
</reference>
<reference key="2">
    <citation type="submission" date="1995-01" db="EMBL/GenBank/DDBJ databases">
        <title>Primary structure and developmental regulation of murine CNBP, a zinc finger-containing protein whose general structure is present in evolutionarily diverse eukaryotes.</title>
        <authorList>
            <person name="Kingsley P.D."/>
            <person name="Palis J."/>
        </authorList>
    </citation>
    <scope>NUCLEOTIDE SEQUENCE (ISOFORM 1)</scope>
    <scope>SUBCELLULAR LOCATION</scope>
    <source>
        <strain>C57BL/6J</strain>
    </source>
</reference>
<reference key="3">
    <citation type="journal article" date="2003" name="Gene">
        <title>Molecular cloning, developmental expression, promoter analysis and functional characterization of the mouse CNBP gene.</title>
        <authorList>
            <person name="Shimizu K."/>
            <person name="Chen W."/>
            <person name="Ashique A.M."/>
            <person name="Moroi R."/>
            <person name="Li Y.P."/>
        </authorList>
    </citation>
    <scope>NUCLEOTIDE SEQUENCE [GENOMIC DNA] (ISOFORM 1)</scope>
    <scope>FUNCTION</scope>
    <scope>SUBCELLULAR LOCATION</scope>
    <scope>DEVELOPMENTAL STAGE</scope>
</reference>
<reference key="4">
    <citation type="journal article" date="2005" name="Science">
        <title>The transcriptional landscape of the mammalian genome.</title>
        <authorList>
            <person name="Carninci P."/>
            <person name="Kasukawa T."/>
            <person name="Katayama S."/>
            <person name="Gough J."/>
            <person name="Frith M.C."/>
            <person name="Maeda N."/>
            <person name="Oyama R."/>
            <person name="Ravasi T."/>
            <person name="Lenhard B."/>
            <person name="Wells C."/>
            <person name="Kodzius R."/>
            <person name="Shimokawa K."/>
            <person name="Bajic V.B."/>
            <person name="Brenner S.E."/>
            <person name="Batalov S."/>
            <person name="Forrest A.R."/>
            <person name="Zavolan M."/>
            <person name="Davis M.J."/>
            <person name="Wilming L.G."/>
            <person name="Aidinis V."/>
            <person name="Allen J.E."/>
            <person name="Ambesi-Impiombato A."/>
            <person name="Apweiler R."/>
            <person name="Aturaliya R.N."/>
            <person name="Bailey T.L."/>
            <person name="Bansal M."/>
            <person name="Baxter L."/>
            <person name="Beisel K.W."/>
            <person name="Bersano T."/>
            <person name="Bono H."/>
            <person name="Chalk A.M."/>
            <person name="Chiu K.P."/>
            <person name="Choudhary V."/>
            <person name="Christoffels A."/>
            <person name="Clutterbuck D.R."/>
            <person name="Crowe M.L."/>
            <person name="Dalla E."/>
            <person name="Dalrymple B.P."/>
            <person name="de Bono B."/>
            <person name="Della Gatta G."/>
            <person name="di Bernardo D."/>
            <person name="Down T."/>
            <person name="Engstrom P."/>
            <person name="Fagiolini M."/>
            <person name="Faulkner G."/>
            <person name="Fletcher C.F."/>
            <person name="Fukushima T."/>
            <person name="Furuno M."/>
            <person name="Futaki S."/>
            <person name="Gariboldi M."/>
            <person name="Georgii-Hemming P."/>
            <person name="Gingeras T.R."/>
            <person name="Gojobori T."/>
            <person name="Green R.E."/>
            <person name="Gustincich S."/>
            <person name="Harbers M."/>
            <person name="Hayashi Y."/>
            <person name="Hensch T.K."/>
            <person name="Hirokawa N."/>
            <person name="Hill D."/>
            <person name="Huminiecki L."/>
            <person name="Iacono M."/>
            <person name="Ikeo K."/>
            <person name="Iwama A."/>
            <person name="Ishikawa T."/>
            <person name="Jakt M."/>
            <person name="Kanapin A."/>
            <person name="Katoh M."/>
            <person name="Kawasawa Y."/>
            <person name="Kelso J."/>
            <person name="Kitamura H."/>
            <person name="Kitano H."/>
            <person name="Kollias G."/>
            <person name="Krishnan S.P."/>
            <person name="Kruger A."/>
            <person name="Kummerfeld S.K."/>
            <person name="Kurochkin I.V."/>
            <person name="Lareau L.F."/>
            <person name="Lazarevic D."/>
            <person name="Lipovich L."/>
            <person name="Liu J."/>
            <person name="Liuni S."/>
            <person name="McWilliam S."/>
            <person name="Madan Babu M."/>
            <person name="Madera M."/>
            <person name="Marchionni L."/>
            <person name="Matsuda H."/>
            <person name="Matsuzawa S."/>
            <person name="Miki H."/>
            <person name="Mignone F."/>
            <person name="Miyake S."/>
            <person name="Morris K."/>
            <person name="Mottagui-Tabar S."/>
            <person name="Mulder N."/>
            <person name="Nakano N."/>
            <person name="Nakauchi H."/>
            <person name="Ng P."/>
            <person name="Nilsson R."/>
            <person name="Nishiguchi S."/>
            <person name="Nishikawa S."/>
            <person name="Nori F."/>
            <person name="Ohara O."/>
            <person name="Okazaki Y."/>
            <person name="Orlando V."/>
            <person name="Pang K.C."/>
            <person name="Pavan W.J."/>
            <person name="Pavesi G."/>
            <person name="Pesole G."/>
            <person name="Petrovsky N."/>
            <person name="Piazza S."/>
            <person name="Reed J."/>
            <person name="Reid J.F."/>
            <person name="Ring B.Z."/>
            <person name="Ringwald M."/>
            <person name="Rost B."/>
            <person name="Ruan Y."/>
            <person name="Salzberg S.L."/>
            <person name="Sandelin A."/>
            <person name="Schneider C."/>
            <person name="Schoenbach C."/>
            <person name="Sekiguchi K."/>
            <person name="Semple C.A."/>
            <person name="Seno S."/>
            <person name="Sessa L."/>
            <person name="Sheng Y."/>
            <person name="Shibata Y."/>
            <person name="Shimada H."/>
            <person name="Shimada K."/>
            <person name="Silva D."/>
            <person name="Sinclair B."/>
            <person name="Sperling S."/>
            <person name="Stupka E."/>
            <person name="Sugiura K."/>
            <person name="Sultana R."/>
            <person name="Takenaka Y."/>
            <person name="Taki K."/>
            <person name="Tammoja K."/>
            <person name="Tan S.L."/>
            <person name="Tang S."/>
            <person name="Taylor M.S."/>
            <person name="Tegner J."/>
            <person name="Teichmann S.A."/>
            <person name="Ueda H.R."/>
            <person name="van Nimwegen E."/>
            <person name="Verardo R."/>
            <person name="Wei C.L."/>
            <person name="Yagi K."/>
            <person name="Yamanishi H."/>
            <person name="Zabarovsky E."/>
            <person name="Zhu S."/>
            <person name="Zimmer A."/>
            <person name="Hide W."/>
            <person name="Bult C."/>
            <person name="Grimmond S.M."/>
            <person name="Teasdale R.D."/>
            <person name="Liu E.T."/>
            <person name="Brusic V."/>
            <person name="Quackenbush J."/>
            <person name="Wahlestedt C."/>
            <person name="Mattick J.S."/>
            <person name="Hume D.A."/>
            <person name="Kai C."/>
            <person name="Sasaki D."/>
            <person name="Tomaru Y."/>
            <person name="Fukuda S."/>
            <person name="Kanamori-Katayama M."/>
            <person name="Suzuki M."/>
            <person name="Aoki J."/>
            <person name="Arakawa T."/>
            <person name="Iida J."/>
            <person name="Imamura K."/>
            <person name="Itoh M."/>
            <person name="Kato T."/>
            <person name="Kawaji H."/>
            <person name="Kawagashira N."/>
            <person name="Kawashima T."/>
            <person name="Kojima M."/>
            <person name="Kondo S."/>
            <person name="Konno H."/>
            <person name="Nakano K."/>
            <person name="Ninomiya N."/>
            <person name="Nishio T."/>
            <person name="Okada M."/>
            <person name="Plessy C."/>
            <person name="Shibata K."/>
            <person name="Shiraki T."/>
            <person name="Suzuki S."/>
            <person name="Tagami M."/>
            <person name="Waki K."/>
            <person name="Watahiki A."/>
            <person name="Okamura-Oho Y."/>
            <person name="Suzuki H."/>
            <person name="Kawai J."/>
            <person name="Hayashizaki Y."/>
        </authorList>
    </citation>
    <scope>NUCLEOTIDE SEQUENCE [LARGE SCALE MRNA] (ISOFORMS 2 AND 3)</scope>
    <source>
        <strain>C57BL/6J</strain>
        <tissue>Testis</tissue>
    </source>
</reference>
<reference key="5">
    <citation type="journal article" date="2004" name="Genome Res.">
        <title>The status, quality, and expansion of the NIH full-length cDNA project: the Mammalian Gene Collection (MGC).</title>
        <authorList>
            <consortium name="The MGC Project Team"/>
        </authorList>
    </citation>
    <scope>NUCLEOTIDE SEQUENCE [LARGE SCALE MRNA] (ISOFORM 1)</scope>
    <source>
        <strain>C57BL/6J</strain>
        <tissue>Brain</tissue>
    </source>
</reference>
<reference key="6">
    <citation type="journal article" date="2010" name="Cell">
        <title>A tissue-specific atlas of mouse protein phosphorylation and expression.</title>
        <authorList>
            <person name="Huttlin E.L."/>
            <person name="Jedrychowski M.P."/>
            <person name="Elias J.E."/>
            <person name="Goswami T."/>
            <person name="Rad R."/>
            <person name="Beausoleil S.A."/>
            <person name="Villen J."/>
            <person name="Haas W."/>
            <person name="Sowa M.E."/>
            <person name="Gygi S.P."/>
        </authorList>
    </citation>
    <scope>PHOSPHORYLATION [LARGE SCALE ANALYSIS] AT SER-49</scope>
    <scope>IDENTIFICATION BY MASS SPECTROMETRY [LARGE SCALE ANALYSIS]</scope>
    <source>
        <tissue>Brain</tissue>
        <tissue>Brown adipose tissue</tissue>
        <tissue>Heart</tissue>
        <tissue>Kidney</tissue>
        <tissue>Liver</tissue>
        <tissue>Lung</tissue>
        <tissue>Pancreas</tissue>
        <tissue>Spleen</tissue>
        <tissue>Testis</tissue>
    </source>
</reference>
<reference key="7">
    <citation type="journal article" date="2013" name="Mol. Cell">
        <title>SIRT5-mediated lysine desuccinylation impacts diverse metabolic pathways.</title>
        <authorList>
            <person name="Park J."/>
            <person name="Chen Y."/>
            <person name="Tishkoff D.X."/>
            <person name="Peng C."/>
            <person name="Tan M."/>
            <person name="Dai L."/>
            <person name="Xie Z."/>
            <person name="Zhang Y."/>
            <person name="Zwaans B.M."/>
            <person name="Skinner M.E."/>
            <person name="Lombard D.B."/>
            <person name="Zhao Y."/>
        </authorList>
    </citation>
    <scope>ACETYLATION [LARGE SCALE ANALYSIS] AT SER-2 AND LYS-8</scope>
    <scope>CLEAVAGE OF INITIATOR METHIONINE [LARGE SCALE ANALYSIS]</scope>
    <scope>IDENTIFICATION BY MASS SPECTROMETRY [LARGE SCALE ANALYSIS]</scope>
    <source>
        <tissue>Embryonic fibroblast</tissue>
    </source>
</reference>
<reference key="8">
    <citation type="journal article" date="2014" name="Mol. Cell. Proteomics">
        <title>Immunoaffinity enrichment and mass spectrometry analysis of protein methylation.</title>
        <authorList>
            <person name="Guo A."/>
            <person name="Gu H."/>
            <person name="Zhou J."/>
            <person name="Mulhern D."/>
            <person name="Wang Y."/>
            <person name="Lee K.A."/>
            <person name="Yang V."/>
            <person name="Aguiar M."/>
            <person name="Kornhauser J."/>
            <person name="Jia X."/>
            <person name="Ren J."/>
            <person name="Beausoleil S.A."/>
            <person name="Silva J.C."/>
            <person name="Vemulapalli V."/>
            <person name="Bedford M.T."/>
            <person name="Comb M.J."/>
        </authorList>
    </citation>
    <scope>METHYLATION [LARGE SCALE ANALYSIS] AT ARG-32; ARG-34 AND ARG-72 (ISOFORM 2)</scope>
    <scope>METHYLATION [LARGE SCALE ANALYSIS] AT ARG-79 (ISOFORM 3)</scope>
    <scope>IDENTIFICATION BY MASS SPECTROMETRY [LARGE SCALE ANALYSIS]</scope>
    <source>
        <tissue>Brain</tissue>
        <tissue>Embryo</tissue>
    </source>
</reference>
<accession>P53996</accession>
<accession>Q80Y06</accession>
<accession>Q8BP23</accession>
<organism>
    <name type="scientific">Mus musculus</name>
    <name type="common">Mouse</name>
    <dbReference type="NCBI Taxonomy" id="10090"/>
    <lineage>
        <taxon>Eukaryota</taxon>
        <taxon>Metazoa</taxon>
        <taxon>Chordata</taxon>
        <taxon>Craniata</taxon>
        <taxon>Vertebrata</taxon>
        <taxon>Euteleostomi</taxon>
        <taxon>Mammalia</taxon>
        <taxon>Eutheria</taxon>
        <taxon>Euarchontoglires</taxon>
        <taxon>Glires</taxon>
        <taxon>Rodentia</taxon>
        <taxon>Myomorpha</taxon>
        <taxon>Muroidea</taxon>
        <taxon>Muridae</taxon>
        <taxon>Murinae</taxon>
        <taxon>Mus</taxon>
        <taxon>Mus</taxon>
    </lineage>
</organism>
<dbReference type="EMBL" id="L12693">
    <property type="protein sequence ID" value="AAA89198.1"/>
    <property type="molecule type" value="mRNA"/>
</dbReference>
<dbReference type="EMBL" id="Z11870">
    <property type="protein sequence ID" value="CAA77896.1"/>
    <property type="molecule type" value="mRNA"/>
</dbReference>
<dbReference type="EMBL" id="X63866">
    <property type="protein sequence ID" value="CAA45345.1"/>
    <property type="molecule type" value="mRNA"/>
</dbReference>
<dbReference type="EMBL" id="Z11871">
    <property type="protein sequence ID" value="CAA77897.1"/>
    <property type="molecule type" value="mRNA"/>
</dbReference>
<dbReference type="EMBL" id="U20326">
    <property type="protein sequence ID" value="AAB60490.1"/>
    <property type="molecule type" value="mRNA"/>
</dbReference>
<dbReference type="EMBL" id="AY176064">
    <property type="protein sequence ID" value="AAO31613.1"/>
    <property type="molecule type" value="Genomic_DNA"/>
</dbReference>
<dbReference type="EMBL" id="AK075760">
    <property type="protein sequence ID" value="BAC35938.1"/>
    <property type="molecule type" value="mRNA"/>
</dbReference>
<dbReference type="EMBL" id="AK078427">
    <property type="protein sequence ID" value="BAC37269.1"/>
    <property type="molecule type" value="mRNA"/>
</dbReference>
<dbReference type="EMBL" id="BC058723">
    <property type="protein sequence ID" value="AAH58723.1"/>
    <property type="molecule type" value="mRNA"/>
</dbReference>
<dbReference type="CCDS" id="CCDS51841.1">
    <molecule id="P53996-1"/>
</dbReference>
<dbReference type="CCDS" id="CCDS85091.1">
    <molecule id="P53996-3"/>
</dbReference>
<dbReference type="CCDS" id="CCDS85092.1">
    <molecule id="P53996-2"/>
</dbReference>
<dbReference type="PIR" id="I48297">
    <property type="entry name" value="I48297"/>
</dbReference>
<dbReference type="PIR" id="I48298">
    <property type="entry name" value="I48298"/>
</dbReference>
<dbReference type="PIR" id="I49259">
    <property type="entry name" value="I49259"/>
</dbReference>
<dbReference type="RefSeq" id="NP_001103215.1">
    <property type="nucleotide sequence ID" value="NM_001109745.1"/>
</dbReference>
<dbReference type="RefSeq" id="NP_001103216.1">
    <molecule id="P53996-2"/>
    <property type="nucleotide sequence ID" value="NM_001109746.1"/>
</dbReference>
<dbReference type="RefSeq" id="NP_001334254.1">
    <molecule id="P53996-3"/>
    <property type="nucleotide sequence ID" value="NM_001347325.1"/>
</dbReference>
<dbReference type="RefSeq" id="NP_038521.1">
    <molecule id="P53996-1"/>
    <property type="nucleotide sequence ID" value="NM_013493.3"/>
</dbReference>
<dbReference type="BioGRID" id="198782">
    <property type="interactions" value="18"/>
</dbReference>
<dbReference type="FunCoup" id="P53996">
    <property type="interactions" value="3252"/>
</dbReference>
<dbReference type="IntAct" id="P53996">
    <property type="interactions" value="3"/>
</dbReference>
<dbReference type="MINT" id="P53996"/>
<dbReference type="STRING" id="10090.ENSMUSP00000032138"/>
<dbReference type="GlyGen" id="P53996">
    <property type="glycosylation" value="1 site, 1 O-linked glycan (1 site)"/>
</dbReference>
<dbReference type="iPTMnet" id="P53996"/>
<dbReference type="PhosphoSitePlus" id="P53996"/>
<dbReference type="SwissPalm" id="P53996"/>
<dbReference type="jPOST" id="P53996"/>
<dbReference type="PaxDb" id="10090-ENSMUSP00000032138"/>
<dbReference type="PeptideAtlas" id="P53996"/>
<dbReference type="ProteomicsDB" id="283393">
    <molecule id="P53996-1"/>
</dbReference>
<dbReference type="ProteomicsDB" id="283394">
    <molecule id="P53996-2"/>
</dbReference>
<dbReference type="ProteomicsDB" id="283395">
    <molecule id="P53996-3"/>
</dbReference>
<dbReference type="Pumba" id="P53996"/>
<dbReference type="Antibodypedia" id="33233">
    <property type="antibodies" value="328 antibodies from 31 providers"/>
</dbReference>
<dbReference type="DNASU" id="12785"/>
<dbReference type="Ensembl" id="ENSMUST00000032138.15">
    <molecule id="P53996-1"/>
    <property type="protein sequence ID" value="ENSMUSP00000032138.9"/>
    <property type="gene ID" value="ENSMUSG00000030057.16"/>
</dbReference>
<dbReference type="Ensembl" id="ENSMUST00000113617.3">
    <molecule id="P53996-3"/>
    <property type="protein sequence ID" value="ENSMUSP00000109247.3"/>
    <property type="gene ID" value="ENSMUSG00000030057.16"/>
</dbReference>
<dbReference type="Ensembl" id="ENSMUST00000113619.8">
    <molecule id="P53996-2"/>
    <property type="protein sequence ID" value="ENSMUSP00000109249.3"/>
    <property type="gene ID" value="ENSMUSG00000030057.16"/>
</dbReference>
<dbReference type="Ensembl" id="ENSMUST00000204653.3">
    <molecule id="P53996-3"/>
    <property type="protein sequence ID" value="ENSMUSP00000145274.2"/>
    <property type="gene ID" value="ENSMUSG00000030057.16"/>
</dbReference>
<dbReference type="GeneID" id="12785"/>
<dbReference type="KEGG" id="mmu:12785"/>
<dbReference type="UCSC" id="uc009cuc.2">
    <molecule id="P53996-1"/>
    <property type="organism name" value="mouse"/>
</dbReference>
<dbReference type="AGR" id="MGI:88431"/>
<dbReference type="CTD" id="7555"/>
<dbReference type="MGI" id="MGI:88431">
    <property type="gene designation" value="Cnbp"/>
</dbReference>
<dbReference type="VEuPathDB" id="HostDB:ENSMUSG00000030057"/>
<dbReference type="eggNOG" id="KOG4400">
    <property type="taxonomic scope" value="Eukaryota"/>
</dbReference>
<dbReference type="GeneTree" id="ENSGT00950000183041"/>
<dbReference type="HOGENOM" id="CLU_058879_4_0_1"/>
<dbReference type="InParanoid" id="P53996"/>
<dbReference type="OMA" id="KGNPTCY"/>
<dbReference type="OrthoDB" id="427960at2759"/>
<dbReference type="PhylomeDB" id="P53996"/>
<dbReference type="TreeFam" id="TF316974"/>
<dbReference type="BioGRID-ORCS" id="12785">
    <property type="hits" value="7 hits in 49 CRISPR screens"/>
</dbReference>
<dbReference type="CD-CODE" id="DE1E139C">
    <property type="entry name" value="Chromatoid body"/>
</dbReference>
<dbReference type="ChiTaRS" id="Cnbp">
    <property type="organism name" value="mouse"/>
</dbReference>
<dbReference type="PRO" id="PR:P53996"/>
<dbReference type="Proteomes" id="UP000000589">
    <property type="component" value="Chromosome 6"/>
</dbReference>
<dbReference type="RNAct" id="P53996">
    <property type="molecule type" value="protein"/>
</dbReference>
<dbReference type="Bgee" id="ENSMUSG00000030057">
    <property type="expression patterns" value="Expressed in otic placode and 296 other cell types or tissues"/>
</dbReference>
<dbReference type="ExpressionAtlas" id="P53996">
    <property type="expression patterns" value="baseline and differential"/>
</dbReference>
<dbReference type="GO" id="GO:0005829">
    <property type="term" value="C:cytosol"/>
    <property type="evidence" value="ECO:0000314"/>
    <property type="project" value="MGI"/>
</dbReference>
<dbReference type="GO" id="GO:0005783">
    <property type="term" value="C:endoplasmic reticulum"/>
    <property type="evidence" value="ECO:0000314"/>
    <property type="project" value="MGI"/>
</dbReference>
<dbReference type="GO" id="GO:0005634">
    <property type="term" value="C:nucleus"/>
    <property type="evidence" value="ECO:0000314"/>
    <property type="project" value="MGI"/>
</dbReference>
<dbReference type="GO" id="GO:0051880">
    <property type="term" value="F:G-quadruplex DNA binding"/>
    <property type="evidence" value="ECO:0007669"/>
    <property type="project" value="Ensembl"/>
</dbReference>
<dbReference type="GO" id="GO:0008270">
    <property type="term" value="F:zinc ion binding"/>
    <property type="evidence" value="ECO:0007669"/>
    <property type="project" value="UniProtKB-KW"/>
</dbReference>
<dbReference type="GO" id="GO:0071919">
    <property type="term" value="P:G-quadruplex DNA formation"/>
    <property type="evidence" value="ECO:0007669"/>
    <property type="project" value="Ensembl"/>
</dbReference>
<dbReference type="GO" id="GO:0000122">
    <property type="term" value="P:negative regulation of transcription by RNA polymerase II"/>
    <property type="evidence" value="ECO:0007669"/>
    <property type="project" value="Ensembl"/>
</dbReference>
<dbReference type="GO" id="GO:0008284">
    <property type="term" value="P:positive regulation of cell population proliferation"/>
    <property type="evidence" value="ECO:0000314"/>
    <property type="project" value="MGI"/>
</dbReference>
<dbReference type="GO" id="GO:0045893">
    <property type="term" value="P:positive regulation of DNA-templated transcription"/>
    <property type="evidence" value="ECO:0000314"/>
    <property type="project" value="UniProtKB"/>
</dbReference>
<dbReference type="GO" id="GO:0045944">
    <property type="term" value="P:positive regulation of transcription by RNA polymerase II"/>
    <property type="evidence" value="ECO:0000314"/>
    <property type="project" value="MGI"/>
</dbReference>
<dbReference type="FunFam" id="4.10.60.10:FF:000002">
    <property type="entry name" value="cellular nucleic acid-binding protein-like isoform X1"/>
    <property type="match status" value="2"/>
</dbReference>
<dbReference type="FunFam" id="4.10.60.10:FF:000006">
    <property type="entry name" value="cellular nucleic acid-binding protein-like isoform X1"/>
    <property type="match status" value="1"/>
</dbReference>
<dbReference type="FunFam" id="4.10.60.10:FF:000026">
    <property type="entry name" value="cellular nucleic acid-binding protein-like isoform X1"/>
    <property type="match status" value="1"/>
</dbReference>
<dbReference type="Gene3D" id="4.10.60.10">
    <property type="entry name" value="Zinc finger, CCHC-type"/>
    <property type="match status" value="5"/>
</dbReference>
<dbReference type="InterPro" id="IPR001878">
    <property type="entry name" value="Znf_CCHC"/>
</dbReference>
<dbReference type="InterPro" id="IPR036875">
    <property type="entry name" value="Znf_CCHC_sf"/>
</dbReference>
<dbReference type="PANTHER" id="PTHR47103">
    <property type="entry name" value="DNA-BINDING PROTEIN"/>
    <property type="match status" value="1"/>
</dbReference>
<dbReference type="PANTHER" id="PTHR47103:SF8">
    <property type="entry name" value="DNA-BINDING PROTEIN"/>
    <property type="match status" value="1"/>
</dbReference>
<dbReference type="Pfam" id="PF00098">
    <property type="entry name" value="zf-CCHC"/>
    <property type="match status" value="7"/>
</dbReference>
<dbReference type="SMART" id="SM00343">
    <property type="entry name" value="ZnF_C2HC"/>
    <property type="match status" value="7"/>
</dbReference>
<dbReference type="SUPFAM" id="SSF57756">
    <property type="entry name" value="Retrovirus zinc finger-like domains"/>
    <property type="match status" value="4"/>
</dbReference>
<dbReference type="PROSITE" id="PS50158">
    <property type="entry name" value="ZF_CCHC"/>
    <property type="match status" value="7"/>
</dbReference>
<sequence>MSSNECFKCGRSGHWARECPTGGGRGRGMRSRGRGGFTSDRGFQFVSSSLPDICYRCGESGHLAKDCDLQEDEACYNCGRGGHIAKDCKEPKREREQCCYNCGKPGHLARDCDHADEQKCYSCGEFGHIQKDCTKVKCYRCGETGHVAINCSKTSEVNCYRCGESGHLARECTIEATA</sequence>
<feature type="initiator methionine" description="Removed" evidence="12">
    <location>
        <position position="1"/>
    </location>
</feature>
<feature type="chain" id="PRO_0000089966" description="CCHC-type zinc finger nucleic acid binding protein">
    <location>
        <begin position="2"/>
        <end position="178"/>
    </location>
</feature>
<feature type="zinc finger region" description="CCHC-type 1" evidence="3">
    <location>
        <begin position="4"/>
        <end position="21"/>
    </location>
</feature>
<feature type="zinc finger region" description="CCHC-type 2" evidence="3">
    <location>
        <begin position="52"/>
        <end position="69"/>
    </location>
</feature>
<feature type="zinc finger region" description="CCHC-type 3" evidence="3">
    <location>
        <begin position="72"/>
        <end position="90"/>
    </location>
</feature>
<feature type="zinc finger region" description="CCHC-type 4" evidence="3">
    <location>
        <begin position="97"/>
        <end position="114"/>
    </location>
</feature>
<feature type="zinc finger region" description="CCHC-type 5" evidence="3">
    <location>
        <begin position="118"/>
        <end position="135"/>
    </location>
</feature>
<feature type="zinc finger region" description="CCHC-type 6" evidence="3">
    <location>
        <begin position="136"/>
        <end position="153"/>
    </location>
</feature>
<feature type="zinc finger region" description="CCHC-type 7" evidence="3">
    <location>
        <begin position="157"/>
        <end position="174"/>
    </location>
</feature>
<feature type="region of interest" description="RNA-binding Arg/Gly-rich region (RGG-box)" evidence="1">
    <location>
        <begin position="25"/>
        <end position="38"/>
    </location>
</feature>
<feature type="modified residue" description="N-acetylserine" evidence="12">
    <location>
        <position position="2"/>
    </location>
</feature>
<feature type="modified residue" description="N6-acetyllysine" evidence="12">
    <location>
        <position position="8"/>
    </location>
</feature>
<feature type="modified residue" description="Omega-N-methylarginine; by PRMT1" evidence="1">
    <location>
        <position position="25"/>
    </location>
</feature>
<feature type="modified residue" description="Omega-N-methylarginine; by PRMT1" evidence="1">
    <location>
        <position position="27"/>
    </location>
</feature>
<feature type="modified residue" description="Phosphoserine" evidence="11">
    <location>
        <position position="49"/>
    </location>
</feature>
<feature type="modified residue" description="Omega-N-methylarginine" evidence="1">
    <location>
        <position position="80"/>
    </location>
</feature>
<feature type="splice variant" id="VSP_010983" description="In isoform 2." evidence="7 8">
    <location>
        <begin position="36"/>
        <end position="42"/>
    </location>
</feature>
<feature type="splice variant" id="VSP_010984" description="In isoform 2 and isoform 3." evidence="7 8">
    <location>
        <position position="73"/>
    </location>
</feature>
<feature type="sequence conflict" description="In Ref. 1; CAA45345/CAA77896." evidence="9" ref="1">
    <original>S</original>
    <variation>R</variation>
    <location>
        <position position="2"/>
    </location>
</feature>
<feature type="sequence conflict" description="In Ref. 4; BAC37269." evidence="9" ref="4">
    <original>S</original>
    <variation>P</variation>
    <location>
        <position position="60"/>
    </location>
</feature>
<feature type="sequence conflict" description="In Ref. 1; CAA77897." evidence="9" ref="1">
    <original>G</original>
    <variation>D</variation>
    <location>
        <position position="106"/>
    </location>
</feature>
<feature type="modified residue" description="Omega-N-methylarginine" evidence="13">
    <location sequence="P53996-2">
        <position position="32"/>
    </location>
</feature>
<feature type="modified residue" description="Omega-N-methylarginine" evidence="13">
    <location sequence="P53996-2">
        <position position="34"/>
    </location>
</feature>
<feature type="modified residue" description="Omega-N-methylarginine" evidence="13">
    <location sequence="P53996-2">
        <position position="72"/>
    </location>
</feature>
<feature type="modified residue" description="Omega-N-methylarginine" evidence="13">
    <location sequence="P53996-3">
        <position position="79"/>
    </location>
</feature>
<keyword id="KW-0007">Acetylation</keyword>
<keyword id="KW-0025">Alternative splicing</keyword>
<keyword id="KW-0963">Cytoplasm</keyword>
<keyword id="KW-0238">DNA-binding</keyword>
<keyword id="KW-0256">Endoplasmic reticulum</keyword>
<keyword id="KW-0479">Metal-binding</keyword>
<keyword id="KW-0488">Methylation</keyword>
<keyword id="KW-0539">Nucleus</keyword>
<keyword id="KW-0597">Phosphoprotein</keyword>
<keyword id="KW-1185">Reference proteome</keyword>
<keyword id="KW-0677">Repeat</keyword>
<keyword id="KW-0678">Repressor</keyword>
<keyword id="KW-0804">Transcription</keyword>
<keyword id="KW-0805">Transcription regulation</keyword>
<keyword id="KW-0862">Zinc</keyword>
<keyword id="KW-0863">Zinc-finger</keyword>
<gene>
    <name evidence="10" type="primary">Cnbp</name>
    <name type="synonym">Cnbp1</name>
    <name type="synonym">Znf9</name>
</gene>
<evidence type="ECO:0000250" key="1">
    <source>
        <dbReference type="UniProtKB" id="P62633"/>
    </source>
</evidence>
<evidence type="ECO:0000250" key="2">
    <source>
        <dbReference type="UniProtKB" id="P62634"/>
    </source>
</evidence>
<evidence type="ECO:0000255" key="3">
    <source>
        <dbReference type="PROSITE-ProRule" id="PRU00047"/>
    </source>
</evidence>
<evidence type="ECO:0000269" key="4">
    <source>
    </source>
</evidence>
<evidence type="ECO:0000269" key="5">
    <source>
    </source>
</evidence>
<evidence type="ECO:0000269" key="6">
    <source ref="2"/>
</evidence>
<evidence type="ECO:0000303" key="7">
    <source>
    </source>
</evidence>
<evidence type="ECO:0000303" key="8">
    <source>
    </source>
</evidence>
<evidence type="ECO:0000305" key="9"/>
<evidence type="ECO:0000312" key="10">
    <source>
        <dbReference type="MGI" id="MGI:88431"/>
    </source>
</evidence>
<evidence type="ECO:0007744" key="11">
    <source>
    </source>
</evidence>
<evidence type="ECO:0007744" key="12">
    <source>
    </source>
</evidence>
<evidence type="ECO:0007744" key="13">
    <source>
    </source>
</evidence>